<dbReference type="EMBL" id="CR626927">
    <property type="protein sequence ID" value="CAH07396.1"/>
    <property type="molecule type" value="Genomic_DNA"/>
</dbReference>
<dbReference type="RefSeq" id="WP_005786574.1">
    <property type="nucleotide sequence ID" value="NZ_UFTH01000001.1"/>
</dbReference>
<dbReference type="SMR" id="Q5LEQ4"/>
<dbReference type="PaxDb" id="272559-BF9343_1615"/>
<dbReference type="GeneID" id="60369810"/>
<dbReference type="KEGG" id="bfs:BF9343_1615"/>
<dbReference type="eggNOG" id="COG0291">
    <property type="taxonomic scope" value="Bacteria"/>
</dbReference>
<dbReference type="HOGENOM" id="CLU_169643_4_3_10"/>
<dbReference type="Proteomes" id="UP000006731">
    <property type="component" value="Chromosome"/>
</dbReference>
<dbReference type="GO" id="GO:0022625">
    <property type="term" value="C:cytosolic large ribosomal subunit"/>
    <property type="evidence" value="ECO:0007669"/>
    <property type="project" value="TreeGrafter"/>
</dbReference>
<dbReference type="GO" id="GO:0003735">
    <property type="term" value="F:structural constituent of ribosome"/>
    <property type="evidence" value="ECO:0007669"/>
    <property type="project" value="InterPro"/>
</dbReference>
<dbReference type="GO" id="GO:0006412">
    <property type="term" value="P:translation"/>
    <property type="evidence" value="ECO:0007669"/>
    <property type="project" value="UniProtKB-UniRule"/>
</dbReference>
<dbReference type="FunFam" id="4.10.410.60:FF:000001">
    <property type="entry name" value="50S ribosomal protein L35"/>
    <property type="match status" value="1"/>
</dbReference>
<dbReference type="Gene3D" id="4.10.410.60">
    <property type="match status" value="1"/>
</dbReference>
<dbReference type="HAMAP" id="MF_00514">
    <property type="entry name" value="Ribosomal_bL35"/>
    <property type="match status" value="1"/>
</dbReference>
<dbReference type="InterPro" id="IPR001706">
    <property type="entry name" value="Ribosomal_bL35"/>
</dbReference>
<dbReference type="InterPro" id="IPR021137">
    <property type="entry name" value="Ribosomal_bL35-like"/>
</dbReference>
<dbReference type="InterPro" id="IPR018265">
    <property type="entry name" value="Ribosomal_bL35_CS"/>
</dbReference>
<dbReference type="InterPro" id="IPR037229">
    <property type="entry name" value="Ribosomal_bL35_sf"/>
</dbReference>
<dbReference type="NCBIfam" id="TIGR00001">
    <property type="entry name" value="rpmI_bact"/>
    <property type="match status" value="1"/>
</dbReference>
<dbReference type="PANTHER" id="PTHR33343">
    <property type="entry name" value="54S RIBOSOMAL PROTEIN BL35M"/>
    <property type="match status" value="1"/>
</dbReference>
<dbReference type="PANTHER" id="PTHR33343:SF1">
    <property type="entry name" value="LARGE RIBOSOMAL SUBUNIT PROTEIN BL35M"/>
    <property type="match status" value="1"/>
</dbReference>
<dbReference type="Pfam" id="PF01632">
    <property type="entry name" value="Ribosomal_L35p"/>
    <property type="match status" value="1"/>
</dbReference>
<dbReference type="PRINTS" id="PR00064">
    <property type="entry name" value="RIBOSOMALL35"/>
</dbReference>
<dbReference type="SUPFAM" id="SSF143034">
    <property type="entry name" value="L35p-like"/>
    <property type="match status" value="1"/>
</dbReference>
<dbReference type="PROSITE" id="PS00936">
    <property type="entry name" value="RIBOSOMAL_L35"/>
    <property type="match status" value="1"/>
</dbReference>
<reference key="1">
    <citation type="journal article" date="2005" name="Science">
        <title>Extensive DNA inversions in the B. fragilis genome control variable gene expression.</title>
        <authorList>
            <person name="Cerdeno-Tarraga A.-M."/>
            <person name="Patrick S."/>
            <person name="Crossman L.C."/>
            <person name="Blakely G."/>
            <person name="Abratt V."/>
            <person name="Lennard N."/>
            <person name="Poxton I."/>
            <person name="Duerden B."/>
            <person name="Harris B."/>
            <person name="Quail M.A."/>
            <person name="Barron A."/>
            <person name="Clark L."/>
            <person name="Corton C."/>
            <person name="Doggett J."/>
            <person name="Holden M.T.G."/>
            <person name="Larke N."/>
            <person name="Line A."/>
            <person name="Lord A."/>
            <person name="Norbertczak H."/>
            <person name="Ormond D."/>
            <person name="Price C."/>
            <person name="Rabbinowitsch E."/>
            <person name="Woodward J."/>
            <person name="Barrell B.G."/>
            <person name="Parkhill J."/>
        </authorList>
    </citation>
    <scope>NUCLEOTIDE SEQUENCE [LARGE SCALE GENOMIC DNA]</scope>
    <source>
        <strain>ATCC 25285 / DSM 2151 / CCUG 4856 / JCM 11019 / LMG 10263 / NCTC 9343 / Onslow / VPI 2553 / EN-2</strain>
    </source>
</reference>
<organism>
    <name type="scientific">Bacteroides fragilis (strain ATCC 25285 / DSM 2151 / CCUG 4856 / JCM 11019 / LMG 10263 / NCTC 9343 / Onslow / VPI 2553 / EN-2)</name>
    <dbReference type="NCBI Taxonomy" id="272559"/>
    <lineage>
        <taxon>Bacteria</taxon>
        <taxon>Pseudomonadati</taxon>
        <taxon>Bacteroidota</taxon>
        <taxon>Bacteroidia</taxon>
        <taxon>Bacteroidales</taxon>
        <taxon>Bacteroidaceae</taxon>
        <taxon>Bacteroides</taxon>
    </lineage>
</organism>
<gene>
    <name evidence="1" type="primary">rpmI</name>
    <name type="ordered locus">BF1696</name>
</gene>
<proteinExistence type="inferred from homology"/>
<feature type="chain" id="PRO_0000258639" description="Large ribosomal subunit protein bL35">
    <location>
        <begin position="1"/>
        <end position="65"/>
    </location>
</feature>
<feature type="region of interest" description="Disordered" evidence="2">
    <location>
        <begin position="1"/>
        <end position="40"/>
    </location>
</feature>
<feature type="compositionally biased region" description="Basic residues" evidence="2">
    <location>
        <begin position="21"/>
        <end position="40"/>
    </location>
</feature>
<comment type="similarity">
    <text evidence="1">Belongs to the bacterial ribosomal protein bL35 family.</text>
</comment>
<accession>Q5LEQ4</accession>
<sequence length="65" mass="7420">MPKMKTNSGSKKRFALTGTGKIKRKHAFHSHILTKKSKKRKRNLCYSTTVDTTNVSQVKELLAMK</sequence>
<keyword id="KW-0687">Ribonucleoprotein</keyword>
<keyword id="KW-0689">Ribosomal protein</keyword>
<name>RL35_BACFN</name>
<protein>
    <recommendedName>
        <fullName evidence="1">Large ribosomal subunit protein bL35</fullName>
    </recommendedName>
    <alternativeName>
        <fullName evidence="3">50S ribosomal protein L35</fullName>
    </alternativeName>
</protein>
<evidence type="ECO:0000255" key="1">
    <source>
        <dbReference type="HAMAP-Rule" id="MF_00514"/>
    </source>
</evidence>
<evidence type="ECO:0000256" key="2">
    <source>
        <dbReference type="SAM" id="MobiDB-lite"/>
    </source>
</evidence>
<evidence type="ECO:0000305" key="3"/>